<keyword id="KW-0131">Cell cycle</keyword>
<keyword id="KW-0132">Cell division</keyword>
<keyword id="KW-0159">Chromosome partition</keyword>
<keyword id="KW-0963">Cytoplasm</keyword>
<keyword id="KW-0229">DNA integration</keyword>
<keyword id="KW-0233">DNA recombination</keyword>
<keyword id="KW-0238">DNA-binding</keyword>
<sequence length="295" mass="33921">MLTALNRYWDYLRIERQMSPHTITNYQHQLDATIKILAQQDIHAWTQVTPSVVRFILAESKKQGLKEKSLALRLSALRRFLSFLVQQGELKVNPTTGISAPKQGKHLPKNMDGEQVQQLLANDSKEPIDIRDRAILELMYSSGLRLSELQGLDLNSINTRVREVRVIGKGNKERVVPFGRYASHAIQEWLKVRALFNPKDEALFVSQLGNRISHRAIQKRLETWGIRQGLNSHLNPHKLRHSFATHMLEASSDLRAVQELLGHSNLSTTQIYTHLNFQHLAEVYDQAHPRAKRKK</sequence>
<reference key="1">
    <citation type="journal article" date="2007" name="Genome Biol.">
        <title>Characterization and modeling of the Haemophilus influenzae core and supragenomes based on the complete genomic sequences of Rd and 12 clinical nontypeable strains.</title>
        <authorList>
            <person name="Hogg J.S."/>
            <person name="Hu F.Z."/>
            <person name="Janto B."/>
            <person name="Boissy R."/>
            <person name="Hayes J."/>
            <person name="Keefe R."/>
            <person name="Post J.C."/>
            <person name="Ehrlich G.D."/>
        </authorList>
    </citation>
    <scope>NUCLEOTIDE SEQUENCE [LARGE SCALE GENOMIC DNA]</scope>
    <source>
        <strain>PittEE</strain>
    </source>
</reference>
<gene>
    <name evidence="1" type="primary">xerC</name>
    <name type="ordered locus">CGSHiEE_08715</name>
</gene>
<feature type="chain" id="PRO_1000070006" description="Tyrosine recombinase XerC">
    <location>
        <begin position="1"/>
        <end position="295"/>
    </location>
</feature>
<feature type="domain" description="Core-binding (CB)" evidence="3">
    <location>
        <begin position="1"/>
        <end position="85"/>
    </location>
</feature>
<feature type="domain" description="Tyr recombinase" evidence="2">
    <location>
        <begin position="106"/>
        <end position="285"/>
    </location>
</feature>
<feature type="active site" evidence="1">
    <location>
        <position position="145"/>
    </location>
</feature>
<feature type="active site" evidence="1">
    <location>
        <position position="169"/>
    </location>
</feature>
<feature type="active site" evidence="1">
    <location>
        <position position="237"/>
    </location>
</feature>
<feature type="active site" evidence="1">
    <location>
        <position position="240"/>
    </location>
</feature>
<feature type="active site" evidence="1">
    <location>
        <position position="263"/>
    </location>
</feature>
<feature type="active site" description="O-(3'-phospho-DNA)-tyrosine intermediate" evidence="1">
    <location>
        <position position="272"/>
    </location>
</feature>
<comment type="function">
    <text evidence="1">Site-specific tyrosine recombinase, which acts by catalyzing the cutting and rejoining of the recombining DNA molecules. The XerC-XerD complex is essential to convert dimers of the bacterial chromosome into monomers to permit their segregation at cell division. It also contributes to the segregational stability of plasmids.</text>
</comment>
<comment type="subunit">
    <text evidence="1">Forms a cyclic heterotetrameric complex composed of two molecules of XerC and two molecules of XerD.</text>
</comment>
<comment type="subcellular location">
    <subcellularLocation>
        <location evidence="1">Cytoplasm</location>
    </subcellularLocation>
</comment>
<comment type="similarity">
    <text evidence="1">Belongs to the 'phage' integrase family. XerC subfamily.</text>
</comment>
<evidence type="ECO:0000255" key="1">
    <source>
        <dbReference type="HAMAP-Rule" id="MF_01808"/>
    </source>
</evidence>
<evidence type="ECO:0000255" key="2">
    <source>
        <dbReference type="PROSITE-ProRule" id="PRU01246"/>
    </source>
</evidence>
<evidence type="ECO:0000255" key="3">
    <source>
        <dbReference type="PROSITE-ProRule" id="PRU01248"/>
    </source>
</evidence>
<dbReference type="EMBL" id="CP000671">
    <property type="protein sequence ID" value="ABQ99042.1"/>
    <property type="molecule type" value="Genomic_DNA"/>
</dbReference>
<dbReference type="SMR" id="A5UE41"/>
<dbReference type="KEGG" id="hip:CGSHiEE_08715"/>
<dbReference type="HOGENOM" id="CLU_027562_9_0_6"/>
<dbReference type="GO" id="GO:0005737">
    <property type="term" value="C:cytoplasm"/>
    <property type="evidence" value="ECO:0007669"/>
    <property type="project" value="UniProtKB-SubCell"/>
</dbReference>
<dbReference type="GO" id="GO:0003677">
    <property type="term" value="F:DNA binding"/>
    <property type="evidence" value="ECO:0007669"/>
    <property type="project" value="UniProtKB-KW"/>
</dbReference>
<dbReference type="GO" id="GO:0009037">
    <property type="term" value="F:tyrosine-based site-specific recombinase activity"/>
    <property type="evidence" value="ECO:0007669"/>
    <property type="project" value="UniProtKB-UniRule"/>
</dbReference>
<dbReference type="GO" id="GO:0051301">
    <property type="term" value="P:cell division"/>
    <property type="evidence" value="ECO:0007669"/>
    <property type="project" value="UniProtKB-KW"/>
</dbReference>
<dbReference type="GO" id="GO:0007059">
    <property type="term" value="P:chromosome segregation"/>
    <property type="evidence" value="ECO:0007669"/>
    <property type="project" value="UniProtKB-UniRule"/>
</dbReference>
<dbReference type="GO" id="GO:0006313">
    <property type="term" value="P:DNA transposition"/>
    <property type="evidence" value="ECO:0007669"/>
    <property type="project" value="UniProtKB-UniRule"/>
</dbReference>
<dbReference type="CDD" id="cd00798">
    <property type="entry name" value="INT_XerDC_C"/>
    <property type="match status" value="1"/>
</dbReference>
<dbReference type="Gene3D" id="1.10.150.130">
    <property type="match status" value="1"/>
</dbReference>
<dbReference type="Gene3D" id="1.10.443.10">
    <property type="entry name" value="Intergrase catalytic core"/>
    <property type="match status" value="1"/>
</dbReference>
<dbReference type="HAMAP" id="MF_01808">
    <property type="entry name" value="Recomb_XerC_XerD"/>
    <property type="match status" value="1"/>
</dbReference>
<dbReference type="InterPro" id="IPR044068">
    <property type="entry name" value="CB"/>
</dbReference>
<dbReference type="InterPro" id="IPR011010">
    <property type="entry name" value="DNA_brk_join_enz"/>
</dbReference>
<dbReference type="InterPro" id="IPR013762">
    <property type="entry name" value="Integrase-like_cat_sf"/>
</dbReference>
<dbReference type="InterPro" id="IPR002104">
    <property type="entry name" value="Integrase_catalytic"/>
</dbReference>
<dbReference type="InterPro" id="IPR010998">
    <property type="entry name" value="Integrase_recombinase_N"/>
</dbReference>
<dbReference type="InterPro" id="IPR004107">
    <property type="entry name" value="Integrase_SAM-like_N"/>
</dbReference>
<dbReference type="InterPro" id="IPR011931">
    <property type="entry name" value="Recomb_XerC"/>
</dbReference>
<dbReference type="InterPro" id="IPR023009">
    <property type="entry name" value="Tyrosine_recombinase_XerC/XerD"/>
</dbReference>
<dbReference type="InterPro" id="IPR050090">
    <property type="entry name" value="Tyrosine_recombinase_XerCD"/>
</dbReference>
<dbReference type="NCBIfam" id="NF001399">
    <property type="entry name" value="PRK00283.1"/>
    <property type="match status" value="1"/>
</dbReference>
<dbReference type="NCBIfam" id="NF040815">
    <property type="entry name" value="recomb_XerA_Arch"/>
    <property type="match status" value="1"/>
</dbReference>
<dbReference type="NCBIfam" id="TIGR02224">
    <property type="entry name" value="recomb_XerC"/>
    <property type="match status" value="1"/>
</dbReference>
<dbReference type="PANTHER" id="PTHR30349">
    <property type="entry name" value="PHAGE INTEGRASE-RELATED"/>
    <property type="match status" value="1"/>
</dbReference>
<dbReference type="PANTHER" id="PTHR30349:SF81">
    <property type="entry name" value="TYROSINE RECOMBINASE XERC"/>
    <property type="match status" value="1"/>
</dbReference>
<dbReference type="Pfam" id="PF02899">
    <property type="entry name" value="Phage_int_SAM_1"/>
    <property type="match status" value="1"/>
</dbReference>
<dbReference type="Pfam" id="PF00589">
    <property type="entry name" value="Phage_integrase"/>
    <property type="match status" value="1"/>
</dbReference>
<dbReference type="SUPFAM" id="SSF56349">
    <property type="entry name" value="DNA breaking-rejoining enzymes"/>
    <property type="match status" value="1"/>
</dbReference>
<dbReference type="SUPFAM" id="SSF47823">
    <property type="entry name" value="lambda integrase-like, N-terminal domain"/>
    <property type="match status" value="1"/>
</dbReference>
<dbReference type="PROSITE" id="PS51900">
    <property type="entry name" value="CB"/>
    <property type="match status" value="1"/>
</dbReference>
<dbReference type="PROSITE" id="PS51898">
    <property type="entry name" value="TYR_RECOMBINASE"/>
    <property type="match status" value="1"/>
</dbReference>
<accession>A5UE41</accession>
<proteinExistence type="inferred from homology"/>
<protein>
    <recommendedName>
        <fullName evidence="1">Tyrosine recombinase XerC</fullName>
    </recommendedName>
</protein>
<name>XERC_HAEIE</name>
<organism>
    <name type="scientific">Haemophilus influenzae (strain PittEE)</name>
    <dbReference type="NCBI Taxonomy" id="374930"/>
    <lineage>
        <taxon>Bacteria</taxon>
        <taxon>Pseudomonadati</taxon>
        <taxon>Pseudomonadota</taxon>
        <taxon>Gammaproteobacteria</taxon>
        <taxon>Pasteurellales</taxon>
        <taxon>Pasteurellaceae</taxon>
        <taxon>Haemophilus</taxon>
    </lineage>
</organism>